<reference key="1">
    <citation type="journal article" date="1997" name="Nature">
        <title>The nucleotide sequence of Saccharomyces cerevisiae chromosome XVI.</title>
        <authorList>
            <person name="Bussey H."/>
            <person name="Storms R.K."/>
            <person name="Ahmed A."/>
            <person name="Albermann K."/>
            <person name="Allen E."/>
            <person name="Ansorge W."/>
            <person name="Araujo R."/>
            <person name="Aparicio A."/>
            <person name="Barrell B.G."/>
            <person name="Badcock K."/>
            <person name="Benes V."/>
            <person name="Botstein D."/>
            <person name="Bowman S."/>
            <person name="Brueckner M."/>
            <person name="Carpenter J."/>
            <person name="Cherry J.M."/>
            <person name="Chung E."/>
            <person name="Churcher C.M."/>
            <person name="Coster F."/>
            <person name="Davis K."/>
            <person name="Davis R.W."/>
            <person name="Dietrich F.S."/>
            <person name="Delius H."/>
            <person name="DiPaolo T."/>
            <person name="Dubois E."/>
            <person name="Duesterhoeft A."/>
            <person name="Duncan M."/>
            <person name="Floeth M."/>
            <person name="Fortin N."/>
            <person name="Friesen J.D."/>
            <person name="Fritz C."/>
            <person name="Goffeau A."/>
            <person name="Hall J."/>
            <person name="Hebling U."/>
            <person name="Heumann K."/>
            <person name="Hilbert H."/>
            <person name="Hillier L.W."/>
            <person name="Hunicke-Smith S."/>
            <person name="Hyman R.W."/>
            <person name="Johnston M."/>
            <person name="Kalman S."/>
            <person name="Kleine K."/>
            <person name="Komp C."/>
            <person name="Kurdi O."/>
            <person name="Lashkari D."/>
            <person name="Lew H."/>
            <person name="Lin A."/>
            <person name="Lin D."/>
            <person name="Louis E.J."/>
            <person name="Marathe R."/>
            <person name="Messenguy F."/>
            <person name="Mewes H.-W."/>
            <person name="Mirtipati S."/>
            <person name="Moestl D."/>
            <person name="Mueller-Auer S."/>
            <person name="Namath A."/>
            <person name="Nentwich U."/>
            <person name="Oefner P."/>
            <person name="Pearson D."/>
            <person name="Petel F.X."/>
            <person name="Pohl T.M."/>
            <person name="Purnelle B."/>
            <person name="Rajandream M.A."/>
            <person name="Rechmann S."/>
            <person name="Rieger M."/>
            <person name="Riles L."/>
            <person name="Roberts D."/>
            <person name="Schaefer M."/>
            <person name="Scharfe M."/>
            <person name="Scherens B."/>
            <person name="Schramm S."/>
            <person name="Schroeder M."/>
            <person name="Sdicu A.-M."/>
            <person name="Tettelin H."/>
            <person name="Urrestarazu L.A."/>
            <person name="Ushinsky S."/>
            <person name="Vierendeels F."/>
            <person name="Vissers S."/>
            <person name="Voss H."/>
            <person name="Walsh S.V."/>
            <person name="Wambutt R."/>
            <person name="Wang Y."/>
            <person name="Wedler E."/>
            <person name="Wedler H."/>
            <person name="Winnett E."/>
            <person name="Zhong W.-W."/>
            <person name="Zollner A."/>
            <person name="Vo D.H."/>
            <person name="Hani J."/>
        </authorList>
    </citation>
    <scope>NUCLEOTIDE SEQUENCE [LARGE SCALE GENOMIC DNA]</scope>
    <source>
        <strain>ATCC 204508 / S288c</strain>
    </source>
</reference>
<reference key="2">
    <citation type="journal article" date="2014" name="G3 (Bethesda)">
        <title>The reference genome sequence of Saccharomyces cerevisiae: Then and now.</title>
        <authorList>
            <person name="Engel S.R."/>
            <person name="Dietrich F.S."/>
            <person name="Fisk D.G."/>
            <person name="Binkley G."/>
            <person name="Balakrishnan R."/>
            <person name="Costanzo M.C."/>
            <person name="Dwight S.S."/>
            <person name="Hitz B.C."/>
            <person name="Karra K."/>
            <person name="Nash R.S."/>
            <person name="Weng S."/>
            <person name="Wong E.D."/>
            <person name="Lloyd P."/>
            <person name="Skrzypek M.S."/>
            <person name="Miyasato S.R."/>
            <person name="Simison M."/>
            <person name="Cherry J.M."/>
        </authorList>
    </citation>
    <scope>GENOME REANNOTATION</scope>
    <source>
        <strain>ATCC 204508 / S288c</strain>
    </source>
</reference>
<reference key="3">
    <citation type="journal article" date="2003" name="EMBO J.">
        <title>The path from nucleolar 90S to cytoplasmic 40S pre-ribosomes.</title>
        <authorList>
            <person name="Schaefer T."/>
            <person name="Strauss D."/>
            <person name="Petfalski E."/>
            <person name="Tollervey D."/>
            <person name="Hurt E."/>
        </authorList>
    </citation>
    <scope>SUBCELLULAR LOCATION</scope>
</reference>
<reference key="4">
    <citation type="journal article" date="2003" name="Nature">
        <title>Global analysis of protein localization in budding yeast.</title>
        <authorList>
            <person name="Huh W.-K."/>
            <person name="Falvo J.V."/>
            <person name="Gerke L.C."/>
            <person name="Carroll A.S."/>
            <person name="Howson R.W."/>
            <person name="Weissman J.S."/>
            <person name="O'Shea E.K."/>
        </authorList>
    </citation>
    <scope>SUBCELLULAR LOCATION [LARGE SCALE ANALYSIS]</scope>
</reference>
<reference key="5">
    <citation type="journal article" date="2003" name="Nature">
        <title>Global analysis of protein expression in yeast.</title>
        <authorList>
            <person name="Ghaemmaghami S."/>
            <person name="Huh W.-K."/>
            <person name="Bower K."/>
            <person name="Howson R.W."/>
            <person name="Belle A."/>
            <person name="Dephoure N."/>
            <person name="O'Shea E.K."/>
            <person name="Weissman J.S."/>
        </authorList>
    </citation>
    <scope>LEVEL OF PROTEIN EXPRESSION [LARGE SCALE ANALYSIS]</scope>
</reference>
<reference key="6">
    <citation type="journal article" date="2004" name="Genes Dev.">
        <title>A pre-ribosome-associated HEAT-repeat protein is required for export of both ribosomal subunits.</title>
        <authorList>
            <person name="Oeffinger M."/>
            <person name="Dlakic M."/>
            <person name="Tollervey D."/>
        </authorList>
    </citation>
    <scope>FUNCTION</scope>
    <scope>INTERACTION WITH GSP1</scope>
    <scope>SUBCELLULAR LOCATION</scope>
</reference>
<reference key="7">
    <citation type="journal article" date="2007" name="J. Proteome Res.">
        <title>Large-scale phosphorylation analysis of alpha-factor-arrested Saccharomyces cerevisiae.</title>
        <authorList>
            <person name="Li X."/>
            <person name="Gerber S.A."/>
            <person name="Rudner A.D."/>
            <person name="Beausoleil S.A."/>
            <person name="Haas W."/>
            <person name="Villen J."/>
            <person name="Elias J.E."/>
            <person name="Gygi S.P."/>
        </authorList>
    </citation>
    <scope>PHOSPHORYLATION [LARGE SCALE ANALYSIS] AT SER-1067</scope>
    <scope>IDENTIFICATION BY MASS SPECTROMETRY [LARGE SCALE ANALYSIS]</scope>
    <source>
        <strain>ADR376</strain>
    </source>
</reference>
<reference key="8">
    <citation type="journal article" date="2008" name="Mol. Cell. Proteomics">
        <title>A multidimensional chromatography technology for in-depth phosphoproteome analysis.</title>
        <authorList>
            <person name="Albuquerque C.P."/>
            <person name="Smolka M.B."/>
            <person name="Payne S.H."/>
            <person name="Bafna V."/>
            <person name="Eng J."/>
            <person name="Zhou H."/>
        </authorList>
    </citation>
    <scope>PHOSPHORYLATION [LARGE SCALE ANALYSIS] AT SER-1067</scope>
    <scope>IDENTIFICATION BY MASS SPECTROMETRY [LARGE SCALE ANALYSIS]</scope>
</reference>
<reference key="9">
    <citation type="journal article" date="2009" name="Science">
        <title>Global analysis of Cdk1 substrate phosphorylation sites provides insights into evolution.</title>
        <authorList>
            <person name="Holt L.J."/>
            <person name="Tuch B.B."/>
            <person name="Villen J."/>
            <person name="Johnson A.D."/>
            <person name="Gygi S.P."/>
            <person name="Morgan D.O."/>
        </authorList>
    </citation>
    <scope>PHOSPHORYLATION [LARGE SCALE ANALYSIS] AT SER-1059 AND SER-1067</scope>
    <scope>IDENTIFICATION BY MASS SPECTROMETRY [LARGE SCALE ANALYSIS]</scope>
</reference>
<evidence type="ECO:0000256" key="1">
    <source>
        <dbReference type="SAM" id="MobiDB-lite"/>
    </source>
</evidence>
<evidence type="ECO:0000269" key="2">
    <source>
    </source>
</evidence>
<evidence type="ECO:0000269" key="3">
    <source>
    </source>
</evidence>
<evidence type="ECO:0000269" key="4">
    <source>
    </source>
</evidence>
<evidence type="ECO:0000269" key="5">
    <source>
    </source>
</evidence>
<evidence type="ECO:0000305" key="6"/>
<evidence type="ECO:0007744" key="7">
    <source>
    </source>
</evidence>
<evidence type="ECO:0007744" key="8">
    <source>
    </source>
</evidence>
<evidence type="ECO:0007744" key="9">
    <source>
    </source>
</evidence>
<name>RRP12_YEAST</name>
<proteinExistence type="evidence at protein level"/>
<feature type="chain" id="PRO_0000270563" description="Ribosomal RNA-processing protein 12">
    <location>
        <begin position="1"/>
        <end position="1228"/>
    </location>
</feature>
<feature type="region of interest" description="Disordered" evidence="1">
    <location>
        <begin position="1168"/>
        <end position="1228"/>
    </location>
</feature>
<feature type="compositionally biased region" description="Basic residues" evidence="1">
    <location>
        <begin position="1212"/>
        <end position="1228"/>
    </location>
</feature>
<feature type="modified residue" description="Phosphoserine" evidence="9">
    <location>
        <position position="1059"/>
    </location>
</feature>
<feature type="modified residue" description="Phosphoserine" evidence="7 8 9">
    <location>
        <position position="1067"/>
    </location>
</feature>
<dbReference type="EMBL" id="U33335">
    <property type="protein sequence ID" value="AAB68093.1"/>
    <property type="molecule type" value="Genomic_DNA"/>
</dbReference>
<dbReference type="EMBL" id="Z71255">
    <property type="protein sequence ID" value="CAA95029.1"/>
    <property type="molecule type" value="Genomic_DNA"/>
</dbReference>
<dbReference type="EMBL" id="Z48483">
    <property type="protein sequence ID" value="CAA88374.1"/>
    <property type="molecule type" value="Genomic_DNA"/>
</dbReference>
<dbReference type="EMBL" id="BK006949">
    <property type="protein sequence ID" value="DAA11416.1"/>
    <property type="molecule type" value="Genomic_DNA"/>
</dbReference>
<dbReference type="PIR" id="S59681">
    <property type="entry name" value="S59681"/>
</dbReference>
<dbReference type="RefSeq" id="NP_015313.1">
    <property type="nucleotide sequence ID" value="NM_001183826.1"/>
</dbReference>
<dbReference type="SMR" id="Q12754"/>
<dbReference type="BioGRID" id="36165">
    <property type="interactions" value="243"/>
</dbReference>
<dbReference type="DIP" id="DIP-6497N"/>
<dbReference type="FunCoup" id="Q12754">
    <property type="interactions" value="1252"/>
</dbReference>
<dbReference type="IntAct" id="Q12754">
    <property type="interactions" value="117"/>
</dbReference>
<dbReference type="MINT" id="Q12754"/>
<dbReference type="STRING" id="4932.YPL012W"/>
<dbReference type="GlyGen" id="Q12754">
    <property type="glycosylation" value="1 site"/>
</dbReference>
<dbReference type="iPTMnet" id="Q12754"/>
<dbReference type="PaxDb" id="4932-YPL012W"/>
<dbReference type="PeptideAtlas" id="Q12754"/>
<dbReference type="EnsemblFungi" id="YPL012W_mRNA">
    <property type="protein sequence ID" value="YPL012W"/>
    <property type="gene ID" value="YPL012W"/>
</dbReference>
<dbReference type="GeneID" id="856095"/>
<dbReference type="KEGG" id="sce:YPL012W"/>
<dbReference type="AGR" id="SGD:S000005933"/>
<dbReference type="SGD" id="S000005933">
    <property type="gene designation" value="RRP12"/>
</dbReference>
<dbReference type="VEuPathDB" id="FungiDB:YPL012W"/>
<dbReference type="eggNOG" id="KOG1248">
    <property type="taxonomic scope" value="Eukaryota"/>
</dbReference>
<dbReference type="GeneTree" id="ENSGT00390000013106"/>
<dbReference type="HOGENOM" id="CLU_003753_1_0_1"/>
<dbReference type="InParanoid" id="Q12754"/>
<dbReference type="OMA" id="PDQMKHR"/>
<dbReference type="OrthoDB" id="2192888at2759"/>
<dbReference type="BioCyc" id="YEAST:G3O-33931-MONOMER"/>
<dbReference type="BioGRID-ORCS" id="856095">
    <property type="hits" value="3 hits in 10 CRISPR screens"/>
</dbReference>
<dbReference type="CD-CODE" id="E03F929F">
    <property type="entry name" value="Stress granule"/>
</dbReference>
<dbReference type="PRO" id="PR:Q12754"/>
<dbReference type="Proteomes" id="UP000002311">
    <property type="component" value="Chromosome XVI"/>
</dbReference>
<dbReference type="RNAct" id="Q12754">
    <property type="molecule type" value="protein"/>
</dbReference>
<dbReference type="GO" id="GO:0030686">
    <property type="term" value="C:90S preribosome"/>
    <property type="evidence" value="ECO:0007005"/>
    <property type="project" value="SGD"/>
</dbReference>
<dbReference type="GO" id="GO:0005737">
    <property type="term" value="C:cytoplasm"/>
    <property type="evidence" value="ECO:0007005"/>
    <property type="project" value="SGD"/>
</dbReference>
<dbReference type="GO" id="GO:0005730">
    <property type="term" value="C:nucleolus"/>
    <property type="evidence" value="ECO:0007005"/>
    <property type="project" value="SGD"/>
</dbReference>
<dbReference type="GO" id="GO:0005634">
    <property type="term" value="C:nucleus"/>
    <property type="evidence" value="ECO:0000314"/>
    <property type="project" value="SGD"/>
</dbReference>
<dbReference type="GO" id="GO:0030688">
    <property type="term" value="C:preribosome, small subunit precursor"/>
    <property type="evidence" value="ECO:0000314"/>
    <property type="project" value="GO_Central"/>
</dbReference>
<dbReference type="GO" id="GO:0005840">
    <property type="term" value="C:ribosome"/>
    <property type="evidence" value="ECO:0000304"/>
    <property type="project" value="SGD"/>
</dbReference>
<dbReference type="GO" id="GO:0003729">
    <property type="term" value="F:mRNA binding"/>
    <property type="evidence" value="ECO:0007005"/>
    <property type="project" value="SGD"/>
</dbReference>
<dbReference type="GO" id="GO:0003723">
    <property type="term" value="F:RNA binding"/>
    <property type="evidence" value="ECO:0000318"/>
    <property type="project" value="GO_Central"/>
</dbReference>
<dbReference type="GO" id="GO:0000462">
    <property type="term" value="P:maturation of SSU-rRNA from tricistronic rRNA transcript (SSU-rRNA, 5.8S rRNA, LSU-rRNA)"/>
    <property type="evidence" value="ECO:0000315"/>
    <property type="project" value="GO_Central"/>
</dbReference>
<dbReference type="GO" id="GO:0042254">
    <property type="term" value="P:ribosome biogenesis"/>
    <property type="evidence" value="ECO:0000304"/>
    <property type="project" value="SGD"/>
</dbReference>
<dbReference type="FunFam" id="1.25.10.10:FF:000923">
    <property type="entry name" value="Ribosomal RNA processing protein"/>
    <property type="match status" value="1"/>
</dbReference>
<dbReference type="Gene3D" id="1.25.10.10">
    <property type="entry name" value="Leucine-rich Repeat Variant"/>
    <property type="match status" value="2"/>
</dbReference>
<dbReference type="InterPro" id="IPR011989">
    <property type="entry name" value="ARM-like"/>
</dbReference>
<dbReference type="InterPro" id="IPR016024">
    <property type="entry name" value="ARM-type_fold"/>
</dbReference>
<dbReference type="InterPro" id="IPR052087">
    <property type="entry name" value="RRP12"/>
</dbReference>
<dbReference type="InterPro" id="IPR012978">
    <property type="entry name" value="RRP12-like_dom"/>
</dbReference>
<dbReference type="PANTHER" id="PTHR48287">
    <property type="entry name" value="ARM REPEAT SUPERFAMILY PROTEIN"/>
    <property type="match status" value="1"/>
</dbReference>
<dbReference type="PANTHER" id="PTHR48287:SF1">
    <property type="entry name" value="ARM REPEAT SUPERFAMILY PROTEIN"/>
    <property type="match status" value="1"/>
</dbReference>
<dbReference type="Pfam" id="PF08161">
    <property type="entry name" value="RRP12_HEAT"/>
    <property type="match status" value="1"/>
</dbReference>
<dbReference type="SUPFAM" id="SSF48371">
    <property type="entry name" value="ARM repeat"/>
    <property type="match status" value="1"/>
</dbReference>
<organism>
    <name type="scientific">Saccharomyces cerevisiae (strain ATCC 204508 / S288c)</name>
    <name type="common">Baker's yeast</name>
    <dbReference type="NCBI Taxonomy" id="559292"/>
    <lineage>
        <taxon>Eukaryota</taxon>
        <taxon>Fungi</taxon>
        <taxon>Dikarya</taxon>
        <taxon>Ascomycota</taxon>
        <taxon>Saccharomycotina</taxon>
        <taxon>Saccharomycetes</taxon>
        <taxon>Saccharomycetales</taxon>
        <taxon>Saccharomycetaceae</taxon>
        <taxon>Saccharomyces</taxon>
    </lineage>
</organism>
<keyword id="KW-0963">Cytoplasm</keyword>
<keyword id="KW-0539">Nucleus</keyword>
<keyword id="KW-0597">Phosphoprotein</keyword>
<keyword id="KW-1185">Reference proteome</keyword>
<keyword id="KW-0690">Ribosome biogenesis</keyword>
<keyword id="KW-0694">RNA-binding</keyword>
<sequence length="1228" mass="137509">MDQDKVAFLLELEDKLAKIRSQVNSKLENQKHIAIILTAVEENIAGQATNDVSKNIVNYIISFMSLLDQAVDPSTHEIKDIQLASSSTYLLDLIFHYSPKVLLRSKFSEILTKIAPCITAEKANAPLIRAAIGCLESLLIAQDAQAWNNTYDLNVTPKRGLQGILELSLDVRPKVRKRALDAVHAVLLNPPVAPTAEHVAAVFVADFCDKQLAGILNDLSNLSNKQLKAQKTKEDINASVMRSLRLITSVVSTGQWPSSQIEPLCDVLLGVTKSSEQYLVSASFECFESMFKTMAETTISSGLAENKYLRVLDTIFALKPSNVDTLLTKSWIAVVIKGMSTYATHQPLKALRKIPGVFHIMCTYLASETPEVYQAASQCLISILSESVKDDLLLYTPSVDEKVFKNVDEIISQIAKTFIDFLSIRYSHCSREILKILVAAFNKFRYRSNPHFLKSLKIVDTWRVNEEQFMDLRNEIELVIGASISAMGPEMILAEAPLNLDNPSSERPGRAWLLPLIRDYTKNANLATFQNELAPYIKSFQSKFDKVPEESIQLRVFQTIVDQIWSTLPRFCELPMDLRESFTDEFASELSSLLYSEVELRTTICHALKVLAESNVSYAEESSSHNVLLLQRFPISEAQKNIEYLSTKSTNLLAVLFNVYTQTTPNARSYILETIDQYLKITSKEDLEKTFNNVCGLLKNSMNEESSGNVNKEKKKPQLTATLLDLIICMITYLPVSSYSALFSMFSLTVNSADALIQKRAYRIITKLSELKSGSTAVAQFISDIENVMVDSASSVQTSAKAARLTAIKTIVELLPLDHLDFIVRTVAEVILSTKDVNEKSRETAFDTLICMGRKMNEPNGIIKLFQIPGYDPTTPDQSSSISEFFKIISAGLIGESQHMVSSSITGYACLVFEFKNELDSGILMDIYDTIELYLTSNSREIVKSAIGFTKVCVLGLPEELMRPKVPELLLKLLRWSHEHTGHFKAKVKHIIERLIRRFGYDYIEANFPEEDRRLLTNIRKMRNRNKRKDEEVTTGVSDVAATKGSRFMSAFDEAVYGSDEENDNGSDQEENVAGGKMKNGAKQFIVESGDNPLDLLDSQTLAHISSTRPKKFNKNQNRARFNDDAFNFDSEGKLVVKGQPKPSTNVDDPLSAVTSGINAYLEAVKSGPVRGQRNKLKFRKNGKDSDEFGDDDDGEKDSRLMRGRVNQGNKIGKHNKKGPKFKSRKKL</sequence>
<protein>
    <recommendedName>
        <fullName>Ribosomal RNA-processing protein 12</fullName>
    </recommendedName>
</protein>
<comment type="function">
    <text evidence="5">In association with GSP1, required for nuclear export of both pre-40S and pre-60S ribosomal subunits. Required for the late maturation of the 18S and 5.8S rRNA of the pre-40S ribosomes and for maturation of the 25S and 5.8S rRNA of the pre-60S ribosomes.</text>
</comment>
<comment type="subunit">
    <text evidence="5">Interacts with GSP1.</text>
</comment>
<comment type="interaction">
    <interactant intactId="EBI-30678">
        <id>Q12754</id>
    </interactant>
    <interactant intactId="EBI-6289">
        <id>P36049</id>
        <label>EBP2</label>
    </interactant>
    <organismsDiffer>false</organismsDiffer>
    <experiments>3</experiments>
</comment>
<comment type="interaction">
    <interactant intactId="EBI-30678">
        <id>Q12754</id>
    </interactant>
    <interactant intactId="EBI-22906">
        <id>P43586</id>
        <label>LOC1</label>
    </interactant>
    <organismsDiffer>false</organismsDiffer>
    <experiments>3</experiments>
</comment>
<comment type="interaction">
    <interactant intactId="EBI-30678">
        <id>Q12754</id>
    </interactant>
    <interactant intactId="EBI-10944">
        <id>Q12176</id>
        <label>MAK21</label>
    </interactant>
    <organismsDiffer>false</organismsDiffer>
    <experiments>3</experiments>
</comment>
<comment type="interaction">
    <interactant intactId="EBI-30678">
        <id>Q12754</id>
    </interactant>
    <interactant intactId="EBI-12122">
        <id>P37838</id>
        <label>NOP4</label>
    </interactant>
    <organismsDiffer>false</organismsDiffer>
    <experiments>4</experiments>
</comment>
<comment type="subcellular location">
    <subcellularLocation>
        <location evidence="2 3 5">Cytoplasm</location>
    </subcellularLocation>
    <subcellularLocation>
        <location evidence="2 3 5">Nucleus</location>
        <location evidence="2 3 5">Nucleolus</location>
    </subcellularLocation>
</comment>
<comment type="miscellaneous">
    <text evidence="4">Present with 8170 molecules/cell in log phase SD medium.</text>
</comment>
<comment type="similarity">
    <text evidence="6">Belongs to the RRP12 family.</text>
</comment>
<accession>Q12754</accession>
<accession>D6W400</accession>
<accession>Q7LH12</accession>
<gene>
    <name type="primary">RRP12</name>
    <name type="ordered locus">YPL012W</name>
</gene>